<feature type="initiator methionine" description="Removed" evidence="2">
    <location>
        <position position="1"/>
    </location>
</feature>
<feature type="chain" id="PRO_0000416911" description="MICOS complex subunit mic25-a">
    <location>
        <begin position="2"/>
        <end position="260"/>
    </location>
</feature>
<feature type="domain" description="CHCH" evidence="3">
    <location>
        <begin position="213"/>
        <end position="255"/>
    </location>
</feature>
<feature type="region of interest" description="Disordered" evidence="4">
    <location>
        <begin position="1"/>
        <end position="92"/>
    </location>
</feature>
<feature type="coiled-coil region" evidence="2">
    <location>
        <begin position="94"/>
        <end position="187"/>
    </location>
</feature>
<feature type="short sequence motif" description="Cx9C motif 1" evidence="3">
    <location>
        <begin position="216"/>
        <end position="226"/>
    </location>
</feature>
<feature type="short sequence motif" description="Cx9C motif 2" evidence="3">
    <location>
        <begin position="237"/>
        <end position="247"/>
    </location>
</feature>
<feature type="compositionally biased region" description="Basic and acidic residues" evidence="4">
    <location>
        <begin position="28"/>
        <end position="39"/>
    </location>
</feature>
<feature type="compositionally biased region" description="Low complexity" evidence="4">
    <location>
        <begin position="48"/>
        <end position="64"/>
    </location>
</feature>
<feature type="lipid moiety-binding region" description="N-myristoyl glycine" evidence="2">
    <location>
        <position position="2"/>
    </location>
</feature>
<feature type="disulfide bond" evidence="3">
    <location>
        <begin position="216"/>
        <end position="247"/>
    </location>
</feature>
<feature type="disulfide bond" evidence="3">
    <location>
        <begin position="226"/>
        <end position="237"/>
    </location>
</feature>
<accession>Q6AX41</accession>
<organism>
    <name type="scientific">Xenopus laevis</name>
    <name type="common">African clawed frog</name>
    <dbReference type="NCBI Taxonomy" id="8355"/>
    <lineage>
        <taxon>Eukaryota</taxon>
        <taxon>Metazoa</taxon>
        <taxon>Chordata</taxon>
        <taxon>Craniata</taxon>
        <taxon>Vertebrata</taxon>
        <taxon>Euteleostomi</taxon>
        <taxon>Amphibia</taxon>
        <taxon>Batrachia</taxon>
        <taxon>Anura</taxon>
        <taxon>Pipoidea</taxon>
        <taxon>Pipidae</taxon>
        <taxon>Xenopodinae</taxon>
        <taxon>Xenopus</taxon>
        <taxon>Xenopus</taxon>
    </lineage>
</organism>
<comment type="function">
    <text evidence="1">Component of the MICOS complex, a large protein complex of the mitochondrial inner membrane that plays crucial roles in the maintenance of crista junctions, inner membrane architecture, and formation of contact sites to the outer membrane.</text>
</comment>
<comment type="subunit">
    <text evidence="1">Component of the mitochondrial contact site and cristae organizing system (MICOS) complex (also known as MINOS or MitOS complex).</text>
</comment>
<comment type="subcellular location">
    <subcellularLocation>
        <location evidence="1">Mitochondrion inner membrane</location>
        <topology evidence="1">Lipid-anchor</topology>
    </subcellularLocation>
</comment>
<comment type="similarity">
    <text evidence="5">Belongs to the MICOS complex subunit Mic19 family. Metazoan Mic25 subfamily.</text>
</comment>
<comment type="sequence caution" evidence="5">
    <conflict type="erroneous initiation">
        <sequence resource="EMBL-CDS" id="AAH79771"/>
    </conflict>
    <text>Extended N-terminus.</text>
</comment>
<protein>
    <recommendedName>
        <fullName>MICOS complex subunit mic25-a</fullName>
    </recommendedName>
    <alternativeName>
        <fullName>Coiled-coil-helix-coiled-coil-helix domain-containing protein 6A</fullName>
    </alternativeName>
</protein>
<sequence>MGGSESTGRKVSFGMDEEERVRVLRGVRLSDEVVNRMKDSNLPSKDQSTSTASGTTSGPTTFPSKAGPSASHSASTSKDGAHKPTARGVGHQYAEEDLYRRYEKEQALIQEELARLAKREREAAHERLSSSVLREKNITSQERRKAEHLPADLDEWAKELEQKEAELQRLNTFYREQLNSIEKKNLEIYKLTAEQFHTAASNAELRVKQRSYDPVCMDLQSNILKCYAENKQERLNCSDLAKEYGKCVSAAQKNLLFNHG</sequence>
<proteinExistence type="evidence at transcript level"/>
<keyword id="KW-0175">Coiled coil</keyword>
<keyword id="KW-1015">Disulfide bond</keyword>
<keyword id="KW-0449">Lipoprotein</keyword>
<keyword id="KW-0472">Membrane</keyword>
<keyword id="KW-0496">Mitochondrion</keyword>
<keyword id="KW-0999">Mitochondrion inner membrane</keyword>
<keyword id="KW-0519">Myristate</keyword>
<keyword id="KW-1185">Reference proteome</keyword>
<evidence type="ECO:0000250" key="1">
    <source>
        <dbReference type="UniProtKB" id="Q9BRQ6"/>
    </source>
</evidence>
<evidence type="ECO:0000255" key="2"/>
<evidence type="ECO:0000255" key="3">
    <source>
        <dbReference type="PROSITE-ProRule" id="PRU01150"/>
    </source>
</evidence>
<evidence type="ECO:0000256" key="4">
    <source>
        <dbReference type="SAM" id="MobiDB-lite"/>
    </source>
</evidence>
<evidence type="ECO:0000305" key="5"/>
<gene>
    <name type="primary">chchd6-a</name>
    <name type="synonym">mic25-a</name>
</gene>
<name>MC25A_XENLA</name>
<reference key="1">
    <citation type="submission" date="2004-08" db="EMBL/GenBank/DDBJ databases">
        <authorList>
            <consortium name="NIH - Xenopus Gene Collection (XGC) project"/>
        </authorList>
    </citation>
    <scope>NUCLEOTIDE SEQUENCE [LARGE SCALE MRNA]</scope>
    <source>
        <tissue>Eye</tissue>
    </source>
</reference>
<dbReference type="EMBL" id="BC079771">
    <property type="protein sequence ID" value="AAH79771.1"/>
    <property type="status" value="ALT_INIT"/>
    <property type="molecule type" value="mRNA"/>
</dbReference>
<dbReference type="SMR" id="Q6AX41"/>
<dbReference type="AGR" id="Xenbase:XB-GENE-945707"/>
<dbReference type="Xenbase" id="XB-GENE-945707">
    <property type="gene designation" value="chchd6.S"/>
</dbReference>
<dbReference type="Proteomes" id="UP000186698">
    <property type="component" value="Unplaced"/>
</dbReference>
<dbReference type="GO" id="GO:0061617">
    <property type="term" value="C:MICOS complex"/>
    <property type="evidence" value="ECO:0007669"/>
    <property type="project" value="InterPro"/>
</dbReference>
<dbReference type="GO" id="GO:0005743">
    <property type="term" value="C:mitochondrial inner membrane"/>
    <property type="evidence" value="ECO:0000250"/>
    <property type="project" value="UniProtKB"/>
</dbReference>
<dbReference type="GO" id="GO:0005739">
    <property type="term" value="C:mitochondrion"/>
    <property type="evidence" value="ECO:0000250"/>
    <property type="project" value="UniProtKB"/>
</dbReference>
<dbReference type="GO" id="GO:0042407">
    <property type="term" value="P:cristae formation"/>
    <property type="evidence" value="ECO:0000250"/>
    <property type="project" value="UniProtKB"/>
</dbReference>
<dbReference type="GO" id="GO:0006974">
    <property type="term" value="P:DNA damage response"/>
    <property type="evidence" value="ECO:0000250"/>
    <property type="project" value="UniProtKB"/>
</dbReference>
<dbReference type="InterPro" id="IPR007964">
    <property type="entry name" value="MIC19/MIC25"/>
</dbReference>
<dbReference type="InterPro" id="IPR042860">
    <property type="entry name" value="MIC25"/>
</dbReference>
<dbReference type="PANTHER" id="PTHR47609">
    <property type="entry name" value="MICOS COMPLEX SUBUNIT MIC25"/>
    <property type="match status" value="1"/>
</dbReference>
<dbReference type="PANTHER" id="PTHR47609:SF1">
    <property type="entry name" value="MICOS COMPLEX SUBUNIT MIC25"/>
    <property type="match status" value="1"/>
</dbReference>
<dbReference type="Pfam" id="PF05300">
    <property type="entry name" value="MIC19_MIC25"/>
    <property type="match status" value="1"/>
</dbReference>
<dbReference type="PROSITE" id="PS51808">
    <property type="entry name" value="CHCH"/>
    <property type="match status" value="1"/>
</dbReference>